<protein>
    <recommendedName>
        <fullName evidence="1">Putative ribose/galactose/methyl galactoside import ATP-binding protein 2</fullName>
        <ecNumber evidence="1">7.5.2.11</ecNumber>
        <ecNumber evidence="1">7.5.2.7</ecNumber>
    </recommendedName>
</protein>
<sequence length="513" mass="56859">MAVSPTTMAAVRASGAVPNAEFLLSAEGVRKEFPGVVALDDVQFRLKRASVHALMGENGAGKSTLMKILAGIYTPDKGDIRLKGVEIQLKSPLDALENGIAMIHQELNLMPFMTVAENIWIRREPKNRFGFIDHGVMHSMTEELFARLNIDIDPDIEVRHLSVANRQMVEIAKAVSYNSDVLIMDEPTSALTEREVEHLFRIIRDLRSQGIGIVYITHKMNELFEIADEFSVFRDGRYIGTHASTDVTRDDIIRMMVGREITQMFPKEEVPIGEIVLSVKDLCLKGVFRNVSFEVRAGEILGVAGLVGSGRSNVAETLFGVTPPSSGTVELFGKPVTISSPTEAIRHQMAFLTEDRKDTGCLLILDILENMQIAVLQDKFVKGGFVQQGALEATCEDMAKRLRVKTPNLYERVENLSGGNQQKVLIGRWLLTHPKILILDEPTRGIDVGAKAEIHRLVTEMARNGVAVIMISSEMPEVLGMSDRIMVMHEGLVTGFLNRDEATQIKVMELAAR</sequence>
<comment type="function">
    <text evidence="1">Part of an ABC transporter complex involved in carbohydrate import. Could be involved in ribose, galactose and/or methyl galactoside import. Responsible for energy coupling to the transport system.</text>
</comment>
<comment type="catalytic activity">
    <reaction evidence="1">
        <text>D-ribose(out) + ATP + H2O = D-ribose(in) + ADP + phosphate + H(+)</text>
        <dbReference type="Rhea" id="RHEA:29903"/>
        <dbReference type="ChEBI" id="CHEBI:15377"/>
        <dbReference type="ChEBI" id="CHEBI:15378"/>
        <dbReference type="ChEBI" id="CHEBI:30616"/>
        <dbReference type="ChEBI" id="CHEBI:43474"/>
        <dbReference type="ChEBI" id="CHEBI:47013"/>
        <dbReference type="ChEBI" id="CHEBI:456216"/>
        <dbReference type="EC" id="7.5.2.7"/>
    </reaction>
</comment>
<comment type="catalytic activity">
    <reaction evidence="1">
        <text>D-galactose(out) + ATP + H2O = D-galactose(in) + ADP + phosphate + H(+)</text>
        <dbReference type="Rhea" id="RHEA:60156"/>
        <dbReference type="ChEBI" id="CHEBI:4139"/>
        <dbReference type="ChEBI" id="CHEBI:15377"/>
        <dbReference type="ChEBI" id="CHEBI:15378"/>
        <dbReference type="ChEBI" id="CHEBI:30616"/>
        <dbReference type="ChEBI" id="CHEBI:43474"/>
        <dbReference type="ChEBI" id="CHEBI:456216"/>
        <dbReference type="EC" id="7.5.2.11"/>
    </reaction>
</comment>
<comment type="subcellular location">
    <subcellularLocation>
        <location evidence="1">Cell inner membrane</location>
        <topology evidence="1">Peripheral membrane protein</topology>
    </subcellularLocation>
</comment>
<comment type="similarity">
    <text evidence="1">Belongs to the ABC transporter superfamily. Carbohydrate importer 2 (CUT2) (TC 3.A.1.2) family.</text>
</comment>
<reference key="1">
    <citation type="journal article" date="2006" name="Proc. Natl. Acad. Sci. U.S.A.">
        <title>The partitioned Rhizobium etli genome: genetic and metabolic redundancy in seven interacting replicons.</title>
        <authorList>
            <person name="Gonzalez V."/>
            <person name="Santamaria R.I."/>
            <person name="Bustos P."/>
            <person name="Hernandez-Gonzalez I."/>
            <person name="Medrano-Soto A."/>
            <person name="Moreno-Hagelsieb G."/>
            <person name="Janga S.C."/>
            <person name="Ramirez M.A."/>
            <person name="Jimenez-Jacinto V."/>
            <person name="Collado-Vides J."/>
            <person name="Davila G."/>
        </authorList>
    </citation>
    <scope>NUCLEOTIDE SEQUENCE [LARGE SCALE GENOMIC DNA]</scope>
    <source>
        <strain>ATCC 51251 / DSM 11541 / JCM 21823 / NBRC 15573 / CFN 42</strain>
    </source>
</reference>
<feature type="chain" id="PRO_0000262988" description="Putative ribose/galactose/methyl galactoside import ATP-binding protein 2">
    <location>
        <begin position="1"/>
        <end position="513"/>
    </location>
</feature>
<feature type="domain" description="ABC transporter 1" evidence="1">
    <location>
        <begin position="24"/>
        <end position="260"/>
    </location>
</feature>
<feature type="domain" description="ABC transporter 2" evidence="1">
    <location>
        <begin position="270"/>
        <end position="510"/>
    </location>
</feature>
<feature type="binding site" evidence="1">
    <location>
        <begin position="56"/>
        <end position="63"/>
    </location>
    <ligand>
        <name>ATP</name>
        <dbReference type="ChEBI" id="CHEBI:30616"/>
    </ligand>
</feature>
<organism>
    <name type="scientific">Rhizobium etli (strain ATCC 51251 / DSM 11541 / JCM 21823 / NBRC 15573 / CFN 42)</name>
    <dbReference type="NCBI Taxonomy" id="347834"/>
    <lineage>
        <taxon>Bacteria</taxon>
        <taxon>Pseudomonadati</taxon>
        <taxon>Pseudomonadota</taxon>
        <taxon>Alphaproteobacteria</taxon>
        <taxon>Hyphomicrobiales</taxon>
        <taxon>Rhizobiaceae</taxon>
        <taxon>Rhizobium/Agrobacterium group</taxon>
        <taxon>Rhizobium</taxon>
    </lineage>
</organism>
<evidence type="ECO:0000255" key="1">
    <source>
        <dbReference type="HAMAP-Rule" id="MF_01717"/>
    </source>
</evidence>
<proteinExistence type="inferred from homology"/>
<gene>
    <name type="ordered locus">RHE_CH03989</name>
</gene>
<name>RGMG2_RHIEC</name>
<accession>Q2K353</accession>
<dbReference type="EC" id="7.5.2.11" evidence="1"/>
<dbReference type="EC" id="7.5.2.7" evidence="1"/>
<dbReference type="EMBL" id="CP000133">
    <property type="protein sequence ID" value="ABC92733.1"/>
    <property type="molecule type" value="Genomic_DNA"/>
</dbReference>
<dbReference type="RefSeq" id="WP_011427177.1">
    <property type="nucleotide sequence ID" value="NC_007761.1"/>
</dbReference>
<dbReference type="SMR" id="Q2K353"/>
<dbReference type="KEGG" id="ret:RHE_CH03989"/>
<dbReference type="eggNOG" id="COG1129">
    <property type="taxonomic scope" value="Bacteria"/>
</dbReference>
<dbReference type="HOGENOM" id="CLU_000604_92_3_5"/>
<dbReference type="OrthoDB" id="9805029at2"/>
<dbReference type="Proteomes" id="UP000001936">
    <property type="component" value="Chromosome"/>
</dbReference>
<dbReference type="GO" id="GO:0005886">
    <property type="term" value="C:plasma membrane"/>
    <property type="evidence" value="ECO:0007669"/>
    <property type="project" value="UniProtKB-SubCell"/>
</dbReference>
<dbReference type="GO" id="GO:0015611">
    <property type="term" value="F:ABC-type D-ribose transporter activity"/>
    <property type="evidence" value="ECO:0007669"/>
    <property type="project" value="UniProtKB-EC"/>
</dbReference>
<dbReference type="GO" id="GO:0005524">
    <property type="term" value="F:ATP binding"/>
    <property type="evidence" value="ECO:0007669"/>
    <property type="project" value="UniProtKB-KW"/>
</dbReference>
<dbReference type="GO" id="GO:0016887">
    <property type="term" value="F:ATP hydrolysis activity"/>
    <property type="evidence" value="ECO:0007669"/>
    <property type="project" value="InterPro"/>
</dbReference>
<dbReference type="CDD" id="cd03216">
    <property type="entry name" value="ABC_Carb_Monos_I"/>
    <property type="match status" value="1"/>
</dbReference>
<dbReference type="CDD" id="cd03215">
    <property type="entry name" value="ABC_Carb_Monos_II"/>
    <property type="match status" value="1"/>
</dbReference>
<dbReference type="FunFam" id="3.40.50.300:FF:000127">
    <property type="entry name" value="Ribose import ATP-binding protein RbsA"/>
    <property type="match status" value="1"/>
</dbReference>
<dbReference type="Gene3D" id="3.40.50.300">
    <property type="entry name" value="P-loop containing nucleotide triphosphate hydrolases"/>
    <property type="match status" value="2"/>
</dbReference>
<dbReference type="InterPro" id="IPR003593">
    <property type="entry name" value="AAA+_ATPase"/>
</dbReference>
<dbReference type="InterPro" id="IPR050107">
    <property type="entry name" value="ABC_carbohydrate_import_ATPase"/>
</dbReference>
<dbReference type="InterPro" id="IPR003439">
    <property type="entry name" value="ABC_transporter-like_ATP-bd"/>
</dbReference>
<dbReference type="InterPro" id="IPR017871">
    <property type="entry name" value="ABC_transporter-like_CS"/>
</dbReference>
<dbReference type="InterPro" id="IPR027417">
    <property type="entry name" value="P-loop_NTPase"/>
</dbReference>
<dbReference type="PANTHER" id="PTHR43790">
    <property type="entry name" value="CARBOHYDRATE TRANSPORT ATP-BINDING PROTEIN MG119-RELATED"/>
    <property type="match status" value="1"/>
</dbReference>
<dbReference type="PANTHER" id="PTHR43790:SF7">
    <property type="entry name" value="GALACTOSE_METHYL GALACTOSIDE IMPORT ATP-BINDING PROTEIN MGLA"/>
    <property type="match status" value="1"/>
</dbReference>
<dbReference type="Pfam" id="PF00005">
    <property type="entry name" value="ABC_tran"/>
    <property type="match status" value="2"/>
</dbReference>
<dbReference type="SMART" id="SM00382">
    <property type="entry name" value="AAA"/>
    <property type="match status" value="2"/>
</dbReference>
<dbReference type="SUPFAM" id="SSF52540">
    <property type="entry name" value="P-loop containing nucleoside triphosphate hydrolases"/>
    <property type="match status" value="2"/>
</dbReference>
<dbReference type="PROSITE" id="PS00211">
    <property type="entry name" value="ABC_TRANSPORTER_1"/>
    <property type="match status" value="1"/>
</dbReference>
<dbReference type="PROSITE" id="PS50893">
    <property type="entry name" value="ABC_TRANSPORTER_2"/>
    <property type="match status" value="2"/>
</dbReference>
<dbReference type="PROSITE" id="PS51260">
    <property type="entry name" value="MGLA"/>
    <property type="match status" value="1"/>
</dbReference>
<dbReference type="PROSITE" id="PS51254">
    <property type="entry name" value="RBSA"/>
    <property type="match status" value="1"/>
</dbReference>
<keyword id="KW-0067">ATP-binding</keyword>
<keyword id="KW-0997">Cell inner membrane</keyword>
<keyword id="KW-1003">Cell membrane</keyword>
<keyword id="KW-0472">Membrane</keyword>
<keyword id="KW-0547">Nucleotide-binding</keyword>
<keyword id="KW-1185">Reference proteome</keyword>
<keyword id="KW-0677">Repeat</keyword>
<keyword id="KW-0762">Sugar transport</keyword>
<keyword id="KW-1278">Translocase</keyword>
<keyword id="KW-0813">Transport</keyword>